<dbReference type="EC" id="3.1.11.6" evidence="1"/>
<dbReference type="EMBL" id="AP006618">
    <property type="protein sequence ID" value="BAD59650.1"/>
    <property type="molecule type" value="Genomic_DNA"/>
</dbReference>
<dbReference type="RefSeq" id="WP_011211334.1">
    <property type="nucleotide sequence ID" value="NC_006361.1"/>
</dbReference>
<dbReference type="SMR" id="Q5YQ91"/>
<dbReference type="STRING" id="247156.NFA_47980"/>
<dbReference type="GeneID" id="61135395"/>
<dbReference type="KEGG" id="nfa:NFA_47980"/>
<dbReference type="eggNOG" id="COG1722">
    <property type="taxonomic scope" value="Bacteria"/>
</dbReference>
<dbReference type="HOGENOM" id="CLU_145918_0_2_11"/>
<dbReference type="OrthoDB" id="5244334at2"/>
<dbReference type="Proteomes" id="UP000006820">
    <property type="component" value="Chromosome"/>
</dbReference>
<dbReference type="GO" id="GO:0005829">
    <property type="term" value="C:cytosol"/>
    <property type="evidence" value="ECO:0007669"/>
    <property type="project" value="TreeGrafter"/>
</dbReference>
<dbReference type="GO" id="GO:0009318">
    <property type="term" value="C:exodeoxyribonuclease VII complex"/>
    <property type="evidence" value="ECO:0007669"/>
    <property type="project" value="InterPro"/>
</dbReference>
<dbReference type="GO" id="GO:0008855">
    <property type="term" value="F:exodeoxyribonuclease VII activity"/>
    <property type="evidence" value="ECO:0007669"/>
    <property type="project" value="UniProtKB-UniRule"/>
</dbReference>
<dbReference type="GO" id="GO:0006308">
    <property type="term" value="P:DNA catabolic process"/>
    <property type="evidence" value="ECO:0007669"/>
    <property type="project" value="UniProtKB-UniRule"/>
</dbReference>
<dbReference type="Gene3D" id="1.10.287.1040">
    <property type="entry name" value="Exonuclease VII, small subunit"/>
    <property type="match status" value="1"/>
</dbReference>
<dbReference type="HAMAP" id="MF_00337">
    <property type="entry name" value="Exonuc_7_S"/>
    <property type="match status" value="1"/>
</dbReference>
<dbReference type="InterPro" id="IPR003761">
    <property type="entry name" value="Exonuc_VII_S"/>
</dbReference>
<dbReference type="InterPro" id="IPR037004">
    <property type="entry name" value="Exonuc_VII_ssu_sf"/>
</dbReference>
<dbReference type="NCBIfam" id="NF002139">
    <property type="entry name" value="PRK00977.1-3"/>
    <property type="match status" value="1"/>
</dbReference>
<dbReference type="NCBIfam" id="TIGR01280">
    <property type="entry name" value="xseB"/>
    <property type="match status" value="1"/>
</dbReference>
<dbReference type="PANTHER" id="PTHR34137">
    <property type="entry name" value="EXODEOXYRIBONUCLEASE 7 SMALL SUBUNIT"/>
    <property type="match status" value="1"/>
</dbReference>
<dbReference type="PANTHER" id="PTHR34137:SF1">
    <property type="entry name" value="EXODEOXYRIBONUCLEASE 7 SMALL SUBUNIT"/>
    <property type="match status" value="1"/>
</dbReference>
<dbReference type="Pfam" id="PF02609">
    <property type="entry name" value="Exonuc_VII_S"/>
    <property type="match status" value="1"/>
</dbReference>
<dbReference type="SUPFAM" id="SSF116842">
    <property type="entry name" value="XseB-like"/>
    <property type="match status" value="1"/>
</dbReference>
<keyword id="KW-0963">Cytoplasm</keyword>
<keyword id="KW-0269">Exonuclease</keyword>
<keyword id="KW-0378">Hydrolase</keyword>
<keyword id="KW-0540">Nuclease</keyword>
<keyword id="KW-1185">Reference proteome</keyword>
<sequence length="78" mass="8570">MADSDKDELAEIAGFGYERARDELVNVVKMLEQGGMDLDESLALWERGEALANRCEEHLAGARKRVEDALAGSESDES</sequence>
<reference key="1">
    <citation type="journal article" date="2004" name="Proc. Natl. Acad. Sci. U.S.A.">
        <title>The complete genomic sequence of Nocardia farcinica IFM 10152.</title>
        <authorList>
            <person name="Ishikawa J."/>
            <person name="Yamashita A."/>
            <person name="Mikami Y."/>
            <person name="Hoshino Y."/>
            <person name="Kurita H."/>
            <person name="Hotta K."/>
            <person name="Shiba T."/>
            <person name="Hattori M."/>
        </authorList>
    </citation>
    <scope>NUCLEOTIDE SEQUENCE [LARGE SCALE GENOMIC DNA]</scope>
    <source>
        <strain>IFM 10152</strain>
    </source>
</reference>
<proteinExistence type="inferred from homology"/>
<organism>
    <name type="scientific">Nocardia farcinica (strain IFM 10152)</name>
    <dbReference type="NCBI Taxonomy" id="247156"/>
    <lineage>
        <taxon>Bacteria</taxon>
        <taxon>Bacillati</taxon>
        <taxon>Actinomycetota</taxon>
        <taxon>Actinomycetes</taxon>
        <taxon>Mycobacteriales</taxon>
        <taxon>Nocardiaceae</taxon>
        <taxon>Nocardia</taxon>
    </lineage>
</organism>
<evidence type="ECO:0000255" key="1">
    <source>
        <dbReference type="HAMAP-Rule" id="MF_00337"/>
    </source>
</evidence>
<name>EX7S_NOCFA</name>
<gene>
    <name evidence="1" type="primary">xseB</name>
    <name type="ordered locus">NFA_47980</name>
</gene>
<accession>Q5YQ91</accession>
<protein>
    <recommendedName>
        <fullName evidence="1">Exodeoxyribonuclease 7 small subunit</fullName>
        <ecNumber evidence="1">3.1.11.6</ecNumber>
    </recommendedName>
    <alternativeName>
        <fullName evidence="1">Exodeoxyribonuclease VII small subunit</fullName>
        <shortName evidence="1">Exonuclease VII small subunit</shortName>
    </alternativeName>
</protein>
<comment type="function">
    <text evidence="1">Bidirectionally degrades single-stranded DNA into large acid-insoluble oligonucleotides, which are then degraded further into small acid-soluble oligonucleotides.</text>
</comment>
<comment type="catalytic activity">
    <reaction evidence="1">
        <text>Exonucleolytic cleavage in either 5'- to 3'- or 3'- to 5'-direction to yield nucleoside 5'-phosphates.</text>
        <dbReference type="EC" id="3.1.11.6"/>
    </reaction>
</comment>
<comment type="subunit">
    <text evidence="1">Heterooligomer composed of large and small subunits.</text>
</comment>
<comment type="subcellular location">
    <subcellularLocation>
        <location evidence="1">Cytoplasm</location>
    </subcellularLocation>
</comment>
<comment type="similarity">
    <text evidence="1">Belongs to the XseB family.</text>
</comment>
<feature type="chain" id="PRO_0000206980" description="Exodeoxyribonuclease 7 small subunit">
    <location>
        <begin position="1"/>
        <end position="78"/>
    </location>
</feature>